<comment type="subcellular location">
    <subcellularLocation>
        <location evidence="2">Cell membrane</location>
        <topology evidence="2">Multi-pass membrane protein</topology>
    </subcellularLocation>
</comment>
<feature type="chain" id="PRO_0000186848" description="Uncharacterized protein aq_267">
    <location>
        <begin position="1"/>
        <end position="378"/>
    </location>
</feature>
<feature type="transmembrane region" description="Helical" evidence="1">
    <location>
        <begin position="7"/>
        <end position="29"/>
    </location>
</feature>
<feature type="transmembrane region" description="Helical" evidence="1">
    <location>
        <begin position="33"/>
        <end position="55"/>
    </location>
</feature>
<feature type="transmembrane region" description="Helical" evidence="1">
    <location>
        <begin position="68"/>
        <end position="85"/>
    </location>
</feature>
<feature type="transmembrane region" description="Helical" evidence="1">
    <location>
        <begin position="90"/>
        <end position="108"/>
    </location>
</feature>
<feature type="transmembrane region" description="Helical" evidence="1">
    <location>
        <begin position="115"/>
        <end position="137"/>
    </location>
</feature>
<feature type="transmembrane region" description="Helical" evidence="1">
    <location>
        <begin position="152"/>
        <end position="174"/>
    </location>
</feature>
<feature type="transmembrane region" description="Helical" evidence="1">
    <location>
        <begin position="204"/>
        <end position="225"/>
    </location>
</feature>
<feature type="transmembrane region" description="Helical" evidence="1">
    <location>
        <begin position="245"/>
        <end position="267"/>
    </location>
</feature>
<feature type="transmembrane region" description="Helical" evidence="1">
    <location>
        <begin position="280"/>
        <end position="302"/>
    </location>
</feature>
<feature type="transmembrane region" description="Helical" evidence="1">
    <location>
        <begin position="347"/>
        <end position="366"/>
    </location>
</feature>
<keyword id="KW-1003">Cell membrane</keyword>
<keyword id="KW-0472">Membrane</keyword>
<keyword id="KW-1185">Reference proteome</keyword>
<keyword id="KW-0812">Transmembrane</keyword>
<keyword id="KW-1133">Transmembrane helix</keyword>
<reference key="1">
    <citation type="journal article" date="1998" name="Nature">
        <title>The complete genome of the hyperthermophilic bacterium Aquifex aeolicus.</title>
        <authorList>
            <person name="Deckert G."/>
            <person name="Warren P.V."/>
            <person name="Gaasterland T."/>
            <person name="Young W.G."/>
            <person name="Lenox A.L."/>
            <person name="Graham D.E."/>
            <person name="Overbeek R."/>
            <person name="Snead M.A."/>
            <person name="Keller M."/>
            <person name="Aujay M."/>
            <person name="Huber R."/>
            <person name="Feldman R.A."/>
            <person name="Short J.M."/>
            <person name="Olsen G.J."/>
            <person name="Swanson R.V."/>
        </authorList>
    </citation>
    <scope>NUCLEOTIDE SEQUENCE [LARGE SCALE GENOMIC DNA]</scope>
    <source>
        <strain>VF5</strain>
    </source>
</reference>
<dbReference type="EMBL" id="AE000657">
    <property type="protein sequence ID" value="AAC06585.1"/>
    <property type="molecule type" value="Genomic_DNA"/>
</dbReference>
<dbReference type="PIR" id="D70324">
    <property type="entry name" value="D70324"/>
</dbReference>
<dbReference type="RefSeq" id="NP_213184.1">
    <property type="nucleotide sequence ID" value="NC_000918.1"/>
</dbReference>
<dbReference type="RefSeq" id="WP_010880122.1">
    <property type="nucleotide sequence ID" value="NC_000918.1"/>
</dbReference>
<dbReference type="STRING" id="224324.aq_267"/>
<dbReference type="EnsemblBacteria" id="AAC06585">
    <property type="protein sequence ID" value="AAC06585"/>
    <property type="gene ID" value="aq_267"/>
</dbReference>
<dbReference type="KEGG" id="aae:aq_267"/>
<dbReference type="PATRIC" id="fig|224324.8.peg.221"/>
<dbReference type="eggNOG" id="ENOG5033U7N">
    <property type="taxonomic scope" value="Bacteria"/>
</dbReference>
<dbReference type="HOGENOM" id="CLU_730853_0_0_0"/>
<dbReference type="InParanoid" id="O66624"/>
<dbReference type="OrthoDB" id="9990at2"/>
<dbReference type="Proteomes" id="UP000000798">
    <property type="component" value="Chromosome"/>
</dbReference>
<dbReference type="GO" id="GO:0005886">
    <property type="term" value="C:plasma membrane"/>
    <property type="evidence" value="ECO:0007669"/>
    <property type="project" value="UniProtKB-SubCell"/>
</dbReference>
<accession>O66624</accession>
<sequence>MFYVSKVTPFFFALALLNLLISLFIRLSQDTSLFFVSLVFGFVGLTLMGAMYQIIPNSQNRKLSIPKVSYLVFFLILVSFYEFYTGNTESGSLFLFLGSLIFFFHLLLNVKNFYPLTVRFLLASMIYLVLSALFLYLHFKGFLPVQLSVHTLTVGSMLNAIYGVELAWIPMLIMETLNIRKGEKLFTAKQVSTLALLLAFWSMNYKLIALAGLLEFGVALYFLYLNYELFKRKRMPTPPPNVVKIFLFALLFLPLGMLLGIFSASHAQALPFSLRLHLDLILYGFGAFTIFGGMLHLLPRIVWNWKVQEKENPGFTMGDLVNERELQTFLEYSALLYALFLAVDSLFSPLHVISTVVYLVIMALFLKEIHKAFLYIFK</sequence>
<gene>
    <name type="ordered locus">aq_267</name>
</gene>
<organism>
    <name type="scientific">Aquifex aeolicus (strain VF5)</name>
    <dbReference type="NCBI Taxonomy" id="224324"/>
    <lineage>
        <taxon>Bacteria</taxon>
        <taxon>Pseudomonadati</taxon>
        <taxon>Aquificota</taxon>
        <taxon>Aquificia</taxon>
        <taxon>Aquificales</taxon>
        <taxon>Aquificaceae</taxon>
        <taxon>Aquifex</taxon>
    </lineage>
</organism>
<name>Y267_AQUAE</name>
<proteinExistence type="predicted"/>
<evidence type="ECO:0000255" key="1"/>
<evidence type="ECO:0000305" key="2"/>
<protein>
    <recommendedName>
        <fullName>Uncharacterized protein aq_267</fullName>
    </recommendedName>
</protein>